<organism>
    <name type="scientific">Azotobacter vinelandii (strain DJ / ATCC BAA-1303)</name>
    <dbReference type="NCBI Taxonomy" id="322710"/>
    <lineage>
        <taxon>Bacteria</taxon>
        <taxon>Pseudomonadati</taxon>
        <taxon>Pseudomonadota</taxon>
        <taxon>Gammaproteobacteria</taxon>
        <taxon>Pseudomonadales</taxon>
        <taxon>Pseudomonadaceae</taxon>
        <taxon>Azotobacter</taxon>
    </lineage>
</organism>
<keyword id="KW-0030">Aminoacyl-tRNA synthetase</keyword>
<keyword id="KW-0067">ATP-binding</keyword>
<keyword id="KW-0963">Cytoplasm</keyword>
<keyword id="KW-0436">Ligase</keyword>
<keyword id="KW-0547">Nucleotide-binding</keyword>
<keyword id="KW-0648">Protein biosynthesis</keyword>
<accession>C1DKY8</accession>
<sequence length="426" mass="47517">MLDSKLVRTQLQEIVGRLATRGFQLDVARFESLEAQRKAVQTRTEQLQAERNARSKTIGQAKSRGEDIAPLLAEVDRMGSDLEAGKRELDAIQAELDALMLSIPNLPHESVPVGADEEDNVEVRRWGVPRTFDFAIKDHVALGERHGWLDFETAAKLSGARFALMRGPIARLHRALAQFMLDLHTGEHGYEEAYTPYLVQAPALQGTGQLPKFEEDLFKISREGEADFYLIPTAEVSLTNIVAGEILDARQLPLKFVAHTPCFRSEAGASGRDTRGMIRQHQFDKVEMVRIVDPAKSYEALEELTANAEKVLQRLELPYRVLALCTGDMGFSATKTYDLEVWVPSQDKYREISSCSNCGDFQARRMQARWRNPETGKPELVHTLNGSGLAVGRTLVAVLENYQQADGSIRVPEVLKPYMGGIEVIG</sequence>
<evidence type="ECO:0000255" key="1">
    <source>
        <dbReference type="HAMAP-Rule" id="MF_00176"/>
    </source>
</evidence>
<dbReference type="EC" id="6.1.1.11" evidence="1"/>
<dbReference type="EMBL" id="CP001157">
    <property type="protein sequence ID" value="ACO78990.1"/>
    <property type="molecule type" value="Genomic_DNA"/>
</dbReference>
<dbReference type="RefSeq" id="WP_012701378.1">
    <property type="nucleotide sequence ID" value="NC_012560.1"/>
</dbReference>
<dbReference type="SMR" id="C1DKY8"/>
<dbReference type="STRING" id="322710.Avin_28180"/>
<dbReference type="EnsemblBacteria" id="ACO78990">
    <property type="protein sequence ID" value="ACO78990"/>
    <property type="gene ID" value="Avin_28180"/>
</dbReference>
<dbReference type="GeneID" id="88185936"/>
<dbReference type="KEGG" id="avn:Avin_28180"/>
<dbReference type="eggNOG" id="COG0172">
    <property type="taxonomic scope" value="Bacteria"/>
</dbReference>
<dbReference type="HOGENOM" id="CLU_023797_1_1_6"/>
<dbReference type="OrthoDB" id="9804647at2"/>
<dbReference type="UniPathway" id="UPA00906">
    <property type="reaction ID" value="UER00895"/>
</dbReference>
<dbReference type="Proteomes" id="UP000002424">
    <property type="component" value="Chromosome"/>
</dbReference>
<dbReference type="GO" id="GO:0005737">
    <property type="term" value="C:cytoplasm"/>
    <property type="evidence" value="ECO:0007669"/>
    <property type="project" value="UniProtKB-SubCell"/>
</dbReference>
<dbReference type="GO" id="GO:0005524">
    <property type="term" value="F:ATP binding"/>
    <property type="evidence" value="ECO:0007669"/>
    <property type="project" value="UniProtKB-UniRule"/>
</dbReference>
<dbReference type="GO" id="GO:0004828">
    <property type="term" value="F:serine-tRNA ligase activity"/>
    <property type="evidence" value="ECO:0007669"/>
    <property type="project" value="UniProtKB-UniRule"/>
</dbReference>
<dbReference type="GO" id="GO:0016260">
    <property type="term" value="P:selenocysteine biosynthetic process"/>
    <property type="evidence" value="ECO:0007669"/>
    <property type="project" value="UniProtKB-UniRule"/>
</dbReference>
<dbReference type="GO" id="GO:0006434">
    <property type="term" value="P:seryl-tRNA aminoacylation"/>
    <property type="evidence" value="ECO:0007669"/>
    <property type="project" value="UniProtKB-UniRule"/>
</dbReference>
<dbReference type="CDD" id="cd00770">
    <property type="entry name" value="SerRS_core"/>
    <property type="match status" value="1"/>
</dbReference>
<dbReference type="Gene3D" id="3.30.930.10">
    <property type="entry name" value="Bira Bifunctional Protein, Domain 2"/>
    <property type="match status" value="1"/>
</dbReference>
<dbReference type="Gene3D" id="1.10.287.40">
    <property type="entry name" value="Serine-tRNA synthetase, tRNA binding domain"/>
    <property type="match status" value="1"/>
</dbReference>
<dbReference type="HAMAP" id="MF_00176">
    <property type="entry name" value="Ser_tRNA_synth_type1"/>
    <property type="match status" value="1"/>
</dbReference>
<dbReference type="InterPro" id="IPR002314">
    <property type="entry name" value="aa-tRNA-synt_IIb"/>
</dbReference>
<dbReference type="InterPro" id="IPR006195">
    <property type="entry name" value="aa-tRNA-synth_II"/>
</dbReference>
<dbReference type="InterPro" id="IPR045864">
    <property type="entry name" value="aa-tRNA-synth_II/BPL/LPL"/>
</dbReference>
<dbReference type="InterPro" id="IPR002317">
    <property type="entry name" value="Ser-tRNA-ligase_type_1"/>
</dbReference>
<dbReference type="InterPro" id="IPR015866">
    <property type="entry name" value="Ser-tRNA-synth_1_N"/>
</dbReference>
<dbReference type="InterPro" id="IPR042103">
    <property type="entry name" value="SerRS_1_N_sf"/>
</dbReference>
<dbReference type="InterPro" id="IPR033729">
    <property type="entry name" value="SerRS_core"/>
</dbReference>
<dbReference type="InterPro" id="IPR010978">
    <property type="entry name" value="tRNA-bd_arm"/>
</dbReference>
<dbReference type="NCBIfam" id="TIGR00414">
    <property type="entry name" value="serS"/>
    <property type="match status" value="1"/>
</dbReference>
<dbReference type="PANTHER" id="PTHR43697:SF1">
    <property type="entry name" value="SERINE--TRNA LIGASE"/>
    <property type="match status" value="1"/>
</dbReference>
<dbReference type="PANTHER" id="PTHR43697">
    <property type="entry name" value="SERYL-TRNA SYNTHETASE"/>
    <property type="match status" value="1"/>
</dbReference>
<dbReference type="Pfam" id="PF02403">
    <property type="entry name" value="Seryl_tRNA_N"/>
    <property type="match status" value="1"/>
</dbReference>
<dbReference type="Pfam" id="PF00587">
    <property type="entry name" value="tRNA-synt_2b"/>
    <property type="match status" value="1"/>
</dbReference>
<dbReference type="PIRSF" id="PIRSF001529">
    <property type="entry name" value="Ser-tRNA-synth_IIa"/>
    <property type="match status" value="1"/>
</dbReference>
<dbReference type="PRINTS" id="PR00981">
    <property type="entry name" value="TRNASYNTHSER"/>
</dbReference>
<dbReference type="SUPFAM" id="SSF55681">
    <property type="entry name" value="Class II aaRS and biotin synthetases"/>
    <property type="match status" value="1"/>
</dbReference>
<dbReference type="SUPFAM" id="SSF46589">
    <property type="entry name" value="tRNA-binding arm"/>
    <property type="match status" value="1"/>
</dbReference>
<dbReference type="PROSITE" id="PS50862">
    <property type="entry name" value="AA_TRNA_LIGASE_II"/>
    <property type="match status" value="1"/>
</dbReference>
<gene>
    <name evidence="1" type="primary">serS</name>
    <name type="ordered locus">Avin_28180</name>
</gene>
<name>SYS_AZOVD</name>
<reference key="1">
    <citation type="journal article" date="2009" name="J. Bacteriol.">
        <title>Genome sequence of Azotobacter vinelandii, an obligate aerobe specialized to support diverse anaerobic metabolic processes.</title>
        <authorList>
            <person name="Setubal J.C."/>
            <person name="Dos Santos P."/>
            <person name="Goldman B.S."/>
            <person name="Ertesvaag H."/>
            <person name="Espin G."/>
            <person name="Rubio L.M."/>
            <person name="Valla S."/>
            <person name="Almeida N.F."/>
            <person name="Balasubramanian D."/>
            <person name="Cromes L."/>
            <person name="Curatti L."/>
            <person name="Du Z."/>
            <person name="Godsy E."/>
            <person name="Goodner B."/>
            <person name="Hellner-Burris K."/>
            <person name="Hernandez J.A."/>
            <person name="Houmiel K."/>
            <person name="Imperial J."/>
            <person name="Kennedy C."/>
            <person name="Larson T.J."/>
            <person name="Latreille P."/>
            <person name="Ligon L.S."/>
            <person name="Lu J."/>
            <person name="Maerk M."/>
            <person name="Miller N.M."/>
            <person name="Norton S."/>
            <person name="O'Carroll I.P."/>
            <person name="Paulsen I."/>
            <person name="Raulfs E.C."/>
            <person name="Roemer R."/>
            <person name="Rosser J."/>
            <person name="Segura D."/>
            <person name="Slater S."/>
            <person name="Stricklin S.L."/>
            <person name="Studholme D.J."/>
            <person name="Sun J."/>
            <person name="Viana C.J."/>
            <person name="Wallin E."/>
            <person name="Wang B."/>
            <person name="Wheeler C."/>
            <person name="Zhu H."/>
            <person name="Dean D.R."/>
            <person name="Dixon R."/>
            <person name="Wood D."/>
        </authorList>
    </citation>
    <scope>NUCLEOTIDE SEQUENCE [LARGE SCALE GENOMIC DNA]</scope>
    <source>
        <strain>DJ / ATCC BAA-1303</strain>
    </source>
</reference>
<feature type="chain" id="PRO_1000203747" description="Serine--tRNA ligase">
    <location>
        <begin position="1"/>
        <end position="426"/>
    </location>
</feature>
<feature type="binding site" evidence="1">
    <location>
        <begin position="233"/>
        <end position="235"/>
    </location>
    <ligand>
        <name>L-serine</name>
        <dbReference type="ChEBI" id="CHEBI:33384"/>
    </ligand>
</feature>
<feature type="binding site" evidence="1">
    <location>
        <begin position="264"/>
        <end position="266"/>
    </location>
    <ligand>
        <name>ATP</name>
        <dbReference type="ChEBI" id="CHEBI:30616"/>
    </ligand>
</feature>
<feature type="binding site" evidence="1">
    <location>
        <position position="287"/>
    </location>
    <ligand>
        <name>L-serine</name>
        <dbReference type="ChEBI" id="CHEBI:33384"/>
    </ligand>
</feature>
<feature type="binding site" evidence="1">
    <location>
        <begin position="351"/>
        <end position="354"/>
    </location>
    <ligand>
        <name>ATP</name>
        <dbReference type="ChEBI" id="CHEBI:30616"/>
    </ligand>
</feature>
<feature type="binding site" evidence="1">
    <location>
        <position position="387"/>
    </location>
    <ligand>
        <name>L-serine</name>
        <dbReference type="ChEBI" id="CHEBI:33384"/>
    </ligand>
</feature>
<protein>
    <recommendedName>
        <fullName evidence="1">Serine--tRNA ligase</fullName>
        <ecNumber evidence="1">6.1.1.11</ecNumber>
    </recommendedName>
    <alternativeName>
        <fullName evidence="1">Seryl-tRNA synthetase</fullName>
        <shortName evidence="1">SerRS</shortName>
    </alternativeName>
    <alternativeName>
        <fullName evidence="1">Seryl-tRNA(Ser/Sec) synthetase</fullName>
    </alternativeName>
</protein>
<proteinExistence type="inferred from homology"/>
<comment type="function">
    <text evidence="1">Catalyzes the attachment of serine to tRNA(Ser). Is also able to aminoacylate tRNA(Sec) with serine, to form the misacylated tRNA L-seryl-tRNA(Sec), which will be further converted into selenocysteinyl-tRNA(Sec).</text>
</comment>
<comment type="catalytic activity">
    <reaction evidence="1">
        <text>tRNA(Ser) + L-serine + ATP = L-seryl-tRNA(Ser) + AMP + diphosphate + H(+)</text>
        <dbReference type="Rhea" id="RHEA:12292"/>
        <dbReference type="Rhea" id="RHEA-COMP:9669"/>
        <dbReference type="Rhea" id="RHEA-COMP:9703"/>
        <dbReference type="ChEBI" id="CHEBI:15378"/>
        <dbReference type="ChEBI" id="CHEBI:30616"/>
        <dbReference type="ChEBI" id="CHEBI:33019"/>
        <dbReference type="ChEBI" id="CHEBI:33384"/>
        <dbReference type="ChEBI" id="CHEBI:78442"/>
        <dbReference type="ChEBI" id="CHEBI:78533"/>
        <dbReference type="ChEBI" id="CHEBI:456215"/>
        <dbReference type="EC" id="6.1.1.11"/>
    </reaction>
</comment>
<comment type="catalytic activity">
    <reaction evidence="1">
        <text>tRNA(Sec) + L-serine + ATP = L-seryl-tRNA(Sec) + AMP + diphosphate + H(+)</text>
        <dbReference type="Rhea" id="RHEA:42580"/>
        <dbReference type="Rhea" id="RHEA-COMP:9742"/>
        <dbReference type="Rhea" id="RHEA-COMP:10128"/>
        <dbReference type="ChEBI" id="CHEBI:15378"/>
        <dbReference type="ChEBI" id="CHEBI:30616"/>
        <dbReference type="ChEBI" id="CHEBI:33019"/>
        <dbReference type="ChEBI" id="CHEBI:33384"/>
        <dbReference type="ChEBI" id="CHEBI:78442"/>
        <dbReference type="ChEBI" id="CHEBI:78533"/>
        <dbReference type="ChEBI" id="CHEBI:456215"/>
        <dbReference type="EC" id="6.1.1.11"/>
    </reaction>
</comment>
<comment type="pathway">
    <text evidence="1">Aminoacyl-tRNA biosynthesis; selenocysteinyl-tRNA(Sec) biosynthesis; L-seryl-tRNA(Sec) from L-serine and tRNA(Sec): step 1/1.</text>
</comment>
<comment type="subunit">
    <text evidence="1">Homodimer. The tRNA molecule binds across the dimer.</text>
</comment>
<comment type="subcellular location">
    <subcellularLocation>
        <location evidence="1">Cytoplasm</location>
    </subcellularLocation>
</comment>
<comment type="domain">
    <text evidence="1">Consists of two distinct domains, a catalytic core and a N-terminal extension that is involved in tRNA binding.</text>
</comment>
<comment type="similarity">
    <text evidence="1">Belongs to the class-II aminoacyl-tRNA synthetase family. Type-1 seryl-tRNA synthetase subfamily.</text>
</comment>